<proteinExistence type="evidence at protein level"/>
<evidence type="ECO:0000255" key="1">
    <source>
        <dbReference type="HAMAP-Rule" id="MF_00628"/>
    </source>
</evidence>
<evidence type="ECO:0007829" key="2">
    <source>
        <dbReference type="PDB" id="1RLK"/>
    </source>
</evidence>
<gene>
    <name evidence="1" type="primary">pth</name>
    <name type="ordered locus">Ta0108</name>
</gene>
<reference key="1">
    <citation type="journal article" date="2000" name="Nature">
        <title>The genome sequence of the thermoacidophilic scavenger Thermoplasma acidophilum.</title>
        <authorList>
            <person name="Ruepp A."/>
            <person name="Graml W."/>
            <person name="Santos-Martinez M.-L."/>
            <person name="Koretke K.K."/>
            <person name="Volker C."/>
            <person name="Mewes H.-W."/>
            <person name="Frishman D."/>
            <person name="Stocker S."/>
            <person name="Lupas A.N."/>
            <person name="Baumeister W."/>
        </authorList>
    </citation>
    <scope>NUCLEOTIDE SEQUENCE [LARGE SCALE GENOMIC DNA]</scope>
    <source>
        <strain>ATCC 25905 / DSM 1728 / JCM 9062 / NBRC 15155 / AMRC-C165</strain>
    </source>
</reference>
<organism>
    <name type="scientific">Thermoplasma acidophilum (strain ATCC 25905 / DSM 1728 / JCM 9062 / NBRC 15155 / AMRC-C165)</name>
    <dbReference type="NCBI Taxonomy" id="273075"/>
    <lineage>
        <taxon>Archaea</taxon>
        <taxon>Methanobacteriati</taxon>
        <taxon>Thermoplasmatota</taxon>
        <taxon>Thermoplasmata</taxon>
        <taxon>Thermoplasmatales</taxon>
        <taxon>Thermoplasmataceae</taxon>
        <taxon>Thermoplasma</taxon>
    </lineage>
</organism>
<name>PTH_THEAC</name>
<protein>
    <recommendedName>
        <fullName evidence="1">Peptidyl-tRNA hydrolase</fullName>
        <shortName evidence="1">PTH</shortName>
        <ecNumber evidence="1">3.1.1.29</ecNumber>
    </recommendedName>
</protein>
<keyword id="KW-0002">3D-structure</keyword>
<keyword id="KW-0963">Cytoplasm</keyword>
<keyword id="KW-0378">Hydrolase</keyword>
<keyword id="KW-1185">Reference proteome</keyword>
<sequence length="117" mass="13170">MVKKMVIAVRKDLDMGKGKIAAQVAHAAVTCAIRSMKINRDVFNEWYDEGQRKIVVKVNDLDEIMEIKRMADSMGIVNEIVQDRGYTQVEPGTITCIGLGPDEEEKLDKITGKYKLL</sequence>
<dbReference type="EC" id="3.1.1.29" evidence="1"/>
<dbReference type="EMBL" id="AL445063">
    <property type="protein sequence ID" value="CAC11256.1"/>
    <property type="molecule type" value="Genomic_DNA"/>
</dbReference>
<dbReference type="RefSeq" id="WP_010900535.1">
    <property type="nucleotide sequence ID" value="NC_002578.1"/>
</dbReference>
<dbReference type="PDB" id="1RLK">
    <property type="method" value="X-ray"/>
    <property type="resolution" value="1.95 A"/>
    <property type="chains" value="A=1-117"/>
</dbReference>
<dbReference type="PDBsum" id="1RLK"/>
<dbReference type="SMR" id="Q9HLW6"/>
<dbReference type="FunCoup" id="Q9HLW6">
    <property type="interactions" value="173"/>
</dbReference>
<dbReference type="STRING" id="273075.gene:9571323"/>
<dbReference type="PaxDb" id="273075-Ta0108"/>
<dbReference type="EnsemblBacteria" id="CAC11256">
    <property type="protein sequence ID" value="CAC11256"/>
    <property type="gene ID" value="CAC11256"/>
</dbReference>
<dbReference type="KEGG" id="tac:Ta0108"/>
<dbReference type="eggNOG" id="arCOG04228">
    <property type="taxonomic scope" value="Archaea"/>
</dbReference>
<dbReference type="HOGENOM" id="CLU_073661_2_2_2"/>
<dbReference type="InParanoid" id="Q9HLW6"/>
<dbReference type="OrthoDB" id="6075at2157"/>
<dbReference type="EvolutionaryTrace" id="Q9HLW6"/>
<dbReference type="Proteomes" id="UP000001024">
    <property type="component" value="Chromosome"/>
</dbReference>
<dbReference type="GO" id="GO:0005829">
    <property type="term" value="C:cytosol"/>
    <property type="evidence" value="ECO:0007669"/>
    <property type="project" value="TreeGrafter"/>
</dbReference>
<dbReference type="GO" id="GO:0004045">
    <property type="term" value="F:peptidyl-tRNA hydrolase activity"/>
    <property type="evidence" value="ECO:0007669"/>
    <property type="project" value="UniProtKB-UniRule"/>
</dbReference>
<dbReference type="GO" id="GO:0006412">
    <property type="term" value="P:translation"/>
    <property type="evidence" value="ECO:0007669"/>
    <property type="project" value="UniProtKB-UniRule"/>
</dbReference>
<dbReference type="CDD" id="cd02430">
    <property type="entry name" value="PTH2"/>
    <property type="match status" value="1"/>
</dbReference>
<dbReference type="FunFam" id="3.40.1490.10:FF:000001">
    <property type="entry name" value="Peptidyl-tRNA hydrolase 2"/>
    <property type="match status" value="1"/>
</dbReference>
<dbReference type="Gene3D" id="3.40.1490.10">
    <property type="entry name" value="Bit1"/>
    <property type="match status" value="1"/>
</dbReference>
<dbReference type="HAMAP" id="MF_00628">
    <property type="entry name" value="Pept_tRNA_hydro_arch"/>
    <property type="match status" value="1"/>
</dbReference>
<dbReference type="InterPro" id="IPR023476">
    <property type="entry name" value="Pep_tRNA_hydro_II_dom_sf"/>
</dbReference>
<dbReference type="InterPro" id="IPR034759">
    <property type="entry name" value="Pept_tRNA_hydro_arch"/>
</dbReference>
<dbReference type="InterPro" id="IPR002833">
    <property type="entry name" value="PTH2"/>
</dbReference>
<dbReference type="NCBIfam" id="TIGR00283">
    <property type="entry name" value="arch_pth2"/>
    <property type="match status" value="1"/>
</dbReference>
<dbReference type="NCBIfam" id="NF003314">
    <property type="entry name" value="PRK04322.1"/>
    <property type="match status" value="1"/>
</dbReference>
<dbReference type="PANTHER" id="PTHR12649">
    <property type="entry name" value="PEPTIDYL-TRNA HYDROLASE 2"/>
    <property type="match status" value="1"/>
</dbReference>
<dbReference type="PANTHER" id="PTHR12649:SF11">
    <property type="entry name" value="PEPTIDYL-TRNA HYDROLASE 2, MITOCHONDRIAL"/>
    <property type="match status" value="1"/>
</dbReference>
<dbReference type="Pfam" id="PF01981">
    <property type="entry name" value="PTH2"/>
    <property type="match status" value="1"/>
</dbReference>
<dbReference type="SUPFAM" id="SSF102462">
    <property type="entry name" value="Peptidyl-tRNA hydrolase II"/>
    <property type="match status" value="1"/>
</dbReference>
<feature type="chain" id="PRO_0000120306" description="Peptidyl-tRNA hydrolase">
    <location>
        <begin position="1"/>
        <end position="117"/>
    </location>
</feature>
<feature type="strand" evidence="2">
    <location>
        <begin position="3"/>
        <end position="11"/>
    </location>
</feature>
<feature type="helix" evidence="2">
    <location>
        <begin position="17"/>
        <end position="38"/>
    </location>
</feature>
<feature type="helix" evidence="2">
    <location>
        <begin position="40"/>
        <end position="48"/>
    </location>
</feature>
<feature type="strand" evidence="2">
    <location>
        <begin position="53"/>
        <end position="60"/>
    </location>
</feature>
<feature type="helix" evidence="2">
    <location>
        <begin position="61"/>
        <end position="74"/>
    </location>
</feature>
<feature type="strand" evidence="2">
    <location>
        <begin position="78"/>
        <end position="82"/>
    </location>
</feature>
<feature type="strand" evidence="2">
    <location>
        <begin position="86"/>
        <end position="90"/>
    </location>
</feature>
<feature type="strand" evidence="2">
    <location>
        <begin position="94"/>
        <end position="103"/>
    </location>
</feature>
<feature type="helix" evidence="2">
    <location>
        <begin position="104"/>
        <end position="111"/>
    </location>
</feature>
<accession>Q9HLW6</accession>
<comment type="function">
    <text evidence="1">The natural substrate for this enzyme may be peptidyl-tRNAs which drop off the ribosome during protein synthesis.</text>
</comment>
<comment type="catalytic activity">
    <reaction evidence="1">
        <text>an N-acyl-L-alpha-aminoacyl-tRNA + H2O = an N-acyl-L-amino acid + a tRNA + H(+)</text>
        <dbReference type="Rhea" id="RHEA:54448"/>
        <dbReference type="Rhea" id="RHEA-COMP:10123"/>
        <dbReference type="Rhea" id="RHEA-COMP:13883"/>
        <dbReference type="ChEBI" id="CHEBI:15377"/>
        <dbReference type="ChEBI" id="CHEBI:15378"/>
        <dbReference type="ChEBI" id="CHEBI:59874"/>
        <dbReference type="ChEBI" id="CHEBI:78442"/>
        <dbReference type="ChEBI" id="CHEBI:138191"/>
        <dbReference type="EC" id="3.1.1.29"/>
    </reaction>
</comment>
<comment type="subcellular location">
    <subcellularLocation>
        <location evidence="1">Cytoplasm</location>
    </subcellularLocation>
</comment>
<comment type="similarity">
    <text evidence="1">Belongs to the PTH2 family.</text>
</comment>